<protein>
    <recommendedName>
        <fullName>Uncharacterized acetyltransferase L280</fullName>
        <ecNumber>2.3.1.-</ecNumber>
    </recommendedName>
</protein>
<dbReference type="EC" id="2.3.1.-"/>
<dbReference type="EMBL" id="AY653733">
    <property type="protein sequence ID" value="AAV50552.1"/>
    <property type="molecule type" value="Genomic_DNA"/>
</dbReference>
<dbReference type="SMR" id="Q5UPV4"/>
<dbReference type="KEGG" id="vg:9924895"/>
<dbReference type="OrthoDB" id="16385at10239"/>
<dbReference type="Proteomes" id="UP000001134">
    <property type="component" value="Genome"/>
</dbReference>
<dbReference type="GO" id="GO:0016407">
    <property type="term" value="F:acetyltransferase activity"/>
    <property type="evidence" value="ECO:0007669"/>
    <property type="project" value="InterPro"/>
</dbReference>
<dbReference type="Gene3D" id="3.30.2140.20">
    <property type="match status" value="1"/>
</dbReference>
<dbReference type="InterPro" id="IPR001447">
    <property type="entry name" value="Arylamine_N-AcTrfase"/>
</dbReference>
<dbReference type="InterPro" id="IPR053710">
    <property type="entry name" value="Arylamine_NAT_domain_sf"/>
</dbReference>
<dbReference type="InterPro" id="IPR038765">
    <property type="entry name" value="Papain-like_cys_pep_sf"/>
</dbReference>
<dbReference type="PANTHER" id="PTHR11786:SF0">
    <property type="entry name" value="ARYLAMINE N-ACETYLTRANSFERASE 4-RELATED"/>
    <property type="match status" value="1"/>
</dbReference>
<dbReference type="PANTHER" id="PTHR11786">
    <property type="entry name" value="N-HYDROXYARYLAMINE O-ACETYLTRANSFERASE"/>
    <property type="match status" value="1"/>
</dbReference>
<dbReference type="Pfam" id="PF00797">
    <property type="entry name" value="Acetyltransf_2"/>
    <property type="match status" value="1"/>
</dbReference>
<dbReference type="SUPFAM" id="SSF54001">
    <property type="entry name" value="Cysteine proteinases"/>
    <property type="match status" value="1"/>
</dbReference>
<evidence type="ECO:0000250" key="1"/>
<evidence type="ECO:0000305" key="2"/>
<name>YL280_MIMIV</name>
<reference key="1">
    <citation type="journal article" date="2004" name="Science">
        <title>The 1.2-megabase genome sequence of Mimivirus.</title>
        <authorList>
            <person name="Raoult D."/>
            <person name="Audic S."/>
            <person name="Robert C."/>
            <person name="Abergel C."/>
            <person name="Renesto P."/>
            <person name="Ogata H."/>
            <person name="La Scola B."/>
            <person name="Susan M."/>
            <person name="Claverie J.-M."/>
        </authorList>
    </citation>
    <scope>NUCLEOTIDE SEQUENCE [LARGE SCALE GENOMIC DNA]</scope>
    <source>
        <strain>Rowbotham-Bradford</strain>
    </source>
</reference>
<organism>
    <name type="scientific">Acanthamoeba polyphaga mimivirus</name>
    <name type="common">APMV</name>
    <dbReference type="NCBI Taxonomy" id="212035"/>
    <lineage>
        <taxon>Viruses</taxon>
        <taxon>Varidnaviria</taxon>
        <taxon>Bamfordvirae</taxon>
        <taxon>Nucleocytoviricota</taxon>
        <taxon>Megaviricetes</taxon>
        <taxon>Imitervirales</taxon>
        <taxon>Mimiviridae</taxon>
        <taxon>Megamimivirinae</taxon>
        <taxon>Mimivirus</taxon>
        <taxon>Mimivirus bradfordmassiliense</taxon>
    </lineage>
</organism>
<proteinExistence type="inferred from homology"/>
<sequence length="204" mass="23849">MTNITVLEQLMQSFLSEYTFSNRDYFQIKSEPPKFDPDIILSKTFQNKYGICMDLNYAFSHVLKKHGFNCYLVKAFEKKSDGQFYDIYHLTIIVIINGCKYLADVGFGKYFSKPVILKNGVTVDKIRVEVPNMKNNENIYNILSHNKFIVQIKDSPLLSISDINDNYQNFFKAGPYDLPLCRKPYDRIYDQKVGDYIIPQKVEK</sequence>
<comment type="similarity">
    <text evidence="2">Belongs to the arylamine N-acetyltransferase family.</text>
</comment>
<accession>Q5UPV4</accession>
<gene>
    <name type="ordered locus">MIMI_L280</name>
</gene>
<feature type="chain" id="PRO_0000243985" description="Uncharacterized acetyltransferase L280">
    <location>
        <begin position="1"/>
        <end position="204"/>
    </location>
</feature>
<feature type="active site" description="Acyl-thioester intermediate" evidence="1">
    <location>
        <position position="52"/>
    </location>
</feature>
<feature type="active site" evidence="1">
    <location>
        <position position="89"/>
    </location>
</feature>
<feature type="active site" evidence="1">
    <location>
        <position position="104"/>
    </location>
</feature>
<organismHost>
    <name type="scientific">Acanthamoeba polyphaga</name>
    <name type="common">Amoeba</name>
    <dbReference type="NCBI Taxonomy" id="5757"/>
</organismHost>
<keyword id="KW-0012">Acyltransferase</keyword>
<keyword id="KW-1185">Reference proteome</keyword>
<keyword id="KW-0808">Transferase</keyword>